<evidence type="ECO:0000250" key="1"/>
<evidence type="ECO:0000250" key="2">
    <source>
        <dbReference type="UniProtKB" id="P00549"/>
    </source>
</evidence>
<evidence type="ECO:0000250" key="3">
    <source>
        <dbReference type="UniProtKB" id="P14618"/>
    </source>
</evidence>
<evidence type="ECO:0000250" key="4">
    <source>
        <dbReference type="UniProtKB" id="P30613"/>
    </source>
</evidence>
<evidence type="ECO:0000255" key="5"/>
<evidence type="ECO:0000269" key="6">
    <source>
    </source>
</evidence>
<evidence type="ECO:0000269" key="7">
    <source>
    </source>
</evidence>
<evidence type="ECO:0000269" key="8">
    <source>
    </source>
</evidence>
<evidence type="ECO:0000305" key="9"/>
<organism>
    <name type="scientific">Arabidopsis thaliana</name>
    <name type="common">Mouse-ear cress</name>
    <dbReference type="NCBI Taxonomy" id="3702"/>
    <lineage>
        <taxon>Eukaryota</taxon>
        <taxon>Viridiplantae</taxon>
        <taxon>Streptophyta</taxon>
        <taxon>Embryophyta</taxon>
        <taxon>Tracheophyta</taxon>
        <taxon>Spermatophyta</taxon>
        <taxon>Magnoliopsida</taxon>
        <taxon>eudicotyledons</taxon>
        <taxon>Gunneridae</taxon>
        <taxon>Pentapetalae</taxon>
        <taxon>rosids</taxon>
        <taxon>malvids</taxon>
        <taxon>Brassicales</taxon>
        <taxon>Brassicaceae</taxon>
        <taxon>Camelineae</taxon>
        <taxon>Arabidopsis</taxon>
    </lineage>
</organism>
<dbReference type="EC" id="2.7.1.40"/>
<dbReference type="EMBL" id="AC007767">
    <property type="protein sequence ID" value="AAF81342.1"/>
    <property type="status" value="ALT_SEQ"/>
    <property type="molecule type" value="Genomic_DNA"/>
</dbReference>
<dbReference type="EMBL" id="CP002684">
    <property type="protein sequence ID" value="AEE31487.1"/>
    <property type="molecule type" value="Genomic_DNA"/>
</dbReference>
<dbReference type="EMBL" id="AY058121">
    <property type="protein sequence ID" value="AAL25538.1"/>
    <property type="molecule type" value="mRNA"/>
</dbReference>
<dbReference type="EMBL" id="BT001147">
    <property type="protein sequence ID" value="AAN64538.1"/>
    <property type="molecule type" value="mRNA"/>
</dbReference>
<dbReference type="PIR" id="F86449">
    <property type="entry name" value="F86449"/>
</dbReference>
<dbReference type="RefSeq" id="NP_564402.1">
    <property type="nucleotide sequence ID" value="NM_102979.2"/>
</dbReference>
<dbReference type="SMR" id="Q93Z53"/>
<dbReference type="BioGRID" id="25372">
    <property type="interactions" value="1"/>
</dbReference>
<dbReference type="FunCoup" id="Q93Z53">
    <property type="interactions" value="465"/>
</dbReference>
<dbReference type="STRING" id="3702.Q93Z53"/>
<dbReference type="PaxDb" id="3702-AT1G32440.1"/>
<dbReference type="ProteomicsDB" id="234763"/>
<dbReference type="EnsemblPlants" id="AT1G32440.1">
    <property type="protein sequence ID" value="AT1G32440.1"/>
    <property type="gene ID" value="AT1G32440"/>
</dbReference>
<dbReference type="GeneID" id="840138"/>
<dbReference type="Gramene" id="AT1G32440.1">
    <property type="protein sequence ID" value="AT1G32440.1"/>
    <property type="gene ID" value="AT1G32440"/>
</dbReference>
<dbReference type="KEGG" id="ath:AT1G32440"/>
<dbReference type="Araport" id="AT1G32440"/>
<dbReference type="TAIR" id="AT1G32440">
    <property type="gene designation" value="PKP3"/>
</dbReference>
<dbReference type="eggNOG" id="KOG2323">
    <property type="taxonomic scope" value="Eukaryota"/>
</dbReference>
<dbReference type="HOGENOM" id="CLU_015439_0_2_1"/>
<dbReference type="InParanoid" id="Q93Z53"/>
<dbReference type="OMA" id="SHMGAMF"/>
<dbReference type="OrthoDB" id="108365at2759"/>
<dbReference type="PhylomeDB" id="Q93Z53"/>
<dbReference type="SABIO-RK" id="Q93Z53"/>
<dbReference type="UniPathway" id="UPA00109">
    <property type="reaction ID" value="UER00188"/>
</dbReference>
<dbReference type="CD-CODE" id="4299E36E">
    <property type="entry name" value="Nucleolus"/>
</dbReference>
<dbReference type="PRO" id="PR:Q93Z53"/>
<dbReference type="Proteomes" id="UP000006548">
    <property type="component" value="Chromosome 1"/>
</dbReference>
<dbReference type="ExpressionAtlas" id="Q93Z53">
    <property type="expression patterns" value="baseline and differential"/>
</dbReference>
<dbReference type="GO" id="GO:0009507">
    <property type="term" value="C:chloroplast"/>
    <property type="evidence" value="ECO:0007005"/>
    <property type="project" value="TAIR"/>
</dbReference>
<dbReference type="GO" id="GO:0009570">
    <property type="term" value="C:chloroplast stroma"/>
    <property type="evidence" value="ECO:0000314"/>
    <property type="project" value="TAIR"/>
</dbReference>
<dbReference type="GO" id="GO:0005524">
    <property type="term" value="F:ATP binding"/>
    <property type="evidence" value="ECO:0007669"/>
    <property type="project" value="UniProtKB-KW"/>
</dbReference>
<dbReference type="GO" id="GO:0016301">
    <property type="term" value="F:kinase activity"/>
    <property type="evidence" value="ECO:0007669"/>
    <property type="project" value="UniProtKB-KW"/>
</dbReference>
<dbReference type="GO" id="GO:0000287">
    <property type="term" value="F:magnesium ion binding"/>
    <property type="evidence" value="ECO:0000314"/>
    <property type="project" value="UniProtKB"/>
</dbReference>
<dbReference type="GO" id="GO:0030955">
    <property type="term" value="F:potassium ion binding"/>
    <property type="evidence" value="ECO:0000314"/>
    <property type="project" value="UniProtKB"/>
</dbReference>
<dbReference type="GO" id="GO:0004743">
    <property type="term" value="F:pyruvate kinase activity"/>
    <property type="evidence" value="ECO:0000314"/>
    <property type="project" value="TAIR"/>
</dbReference>
<dbReference type="GO" id="GO:0010431">
    <property type="term" value="P:seed maturation"/>
    <property type="evidence" value="ECO:0000250"/>
    <property type="project" value="UniProtKB"/>
</dbReference>
<dbReference type="FunFam" id="2.40.33.10:FF:000003">
    <property type="entry name" value="Pyruvate kinase"/>
    <property type="match status" value="1"/>
</dbReference>
<dbReference type="FunFam" id="3.20.20.60:FF:000025">
    <property type="entry name" value="Pyruvate kinase"/>
    <property type="match status" value="1"/>
</dbReference>
<dbReference type="FunFam" id="3.40.1380.20:FF:000008">
    <property type="entry name" value="Pyruvate kinase"/>
    <property type="match status" value="1"/>
</dbReference>
<dbReference type="Gene3D" id="3.20.20.60">
    <property type="entry name" value="Phosphoenolpyruvate-binding domains"/>
    <property type="match status" value="1"/>
</dbReference>
<dbReference type="Gene3D" id="2.40.33.10">
    <property type="entry name" value="PK beta-barrel domain-like"/>
    <property type="match status" value="1"/>
</dbReference>
<dbReference type="Gene3D" id="3.40.1380.20">
    <property type="entry name" value="Pyruvate kinase, C-terminal domain"/>
    <property type="match status" value="1"/>
</dbReference>
<dbReference type="InterPro" id="IPR001697">
    <property type="entry name" value="Pyr_Knase"/>
</dbReference>
<dbReference type="InterPro" id="IPR015813">
    <property type="entry name" value="Pyrv/PenolPyrv_kinase-like_dom"/>
</dbReference>
<dbReference type="InterPro" id="IPR040442">
    <property type="entry name" value="Pyrv_kinase-like_dom_sf"/>
</dbReference>
<dbReference type="InterPro" id="IPR011037">
    <property type="entry name" value="Pyrv_Knase-like_insert_dom_sf"/>
</dbReference>
<dbReference type="InterPro" id="IPR018209">
    <property type="entry name" value="Pyrv_Knase_AS"/>
</dbReference>
<dbReference type="InterPro" id="IPR015793">
    <property type="entry name" value="Pyrv_Knase_brl"/>
</dbReference>
<dbReference type="InterPro" id="IPR015795">
    <property type="entry name" value="Pyrv_Knase_C"/>
</dbReference>
<dbReference type="InterPro" id="IPR036918">
    <property type="entry name" value="Pyrv_Knase_C_sf"/>
</dbReference>
<dbReference type="InterPro" id="IPR015806">
    <property type="entry name" value="Pyrv_Knase_insert_dom_sf"/>
</dbReference>
<dbReference type="NCBIfam" id="NF004491">
    <property type="entry name" value="PRK05826.1"/>
    <property type="match status" value="1"/>
</dbReference>
<dbReference type="NCBIfam" id="TIGR01064">
    <property type="entry name" value="pyruv_kin"/>
    <property type="match status" value="1"/>
</dbReference>
<dbReference type="PANTHER" id="PTHR11817">
    <property type="entry name" value="PYRUVATE KINASE"/>
    <property type="match status" value="1"/>
</dbReference>
<dbReference type="Pfam" id="PF00224">
    <property type="entry name" value="PK"/>
    <property type="match status" value="1"/>
</dbReference>
<dbReference type="Pfam" id="PF02887">
    <property type="entry name" value="PK_C"/>
    <property type="match status" value="1"/>
</dbReference>
<dbReference type="PRINTS" id="PR01050">
    <property type="entry name" value="PYRUVTKNASE"/>
</dbReference>
<dbReference type="SUPFAM" id="SSF51621">
    <property type="entry name" value="Phosphoenolpyruvate/pyruvate domain"/>
    <property type="match status" value="1"/>
</dbReference>
<dbReference type="SUPFAM" id="SSF50800">
    <property type="entry name" value="PK beta-barrel domain-like"/>
    <property type="match status" value="1"/>
</dbReference>
<dbReference type="SUPFAM" id="SSF52935">
    <property type="entry name" value="PK C-terminal domain-like"/>
    <property type="match status" value="1"/>
</dbReference>
<dbReference type="PROSITE" id="PS00110">
    <property type="entry name" value="PYRUVATE_KINASE"/>
    <property type="match status" value="1"/>
</dbReference>
<proteinExistence type="evidence at protein level"/>
<feature type="transit peptide" description="Chloroplast" evidence="5">
    <location>
        <begin position="1"/>
        <end position="55"/>
    </location>
</feature>
<feature type="chain" id="PRO_0000416989" description="Plastidial pyruvate kinase 3, chloroplastic">
    <location>
        <begin position="56"/>
        <end position="571"/>
    </location>
</feature>
<feature type="binding site" evidence="4">
    <location>
        <position position="129"/>
    </location>
    <ligand>
        <name>substrate</name>
    </ligand>
</feature>
<feature type="binding site" evidence="3">
    <location>
        <begin position="131"/>
        <end position="134"/>
    </location>
    <ligand>
        <name>ATP</name>
        <dbReference type="ChEBI" id="CHEBI:30616"/>
    </ligand>
</feature>
<feature type="binding site" evidence="4">
    <location>
        <position position="131"/>
    </location>
    <ligand>
        <name>K(+)</name>
        <dbReference type="ChEBI" id="CHEBI:29103"/>
    </ligand>
</feature>
<feature type="binding site" evidence="4">
    <location>
        <position position="133"/>
    </location>
    <ligand>
        <name>K(+)</name>
        <dbReference type="ChEBI" id="CHEBI:29103"/>
    </ligand>
</feature>
<feature type="binding site" evidence="4">
    <location>
        <position position="164"/>
    </location>
    <ligand>
        <name>K(+)</name>
        <dbReference type="ChEBI" id="CHEBI:29103"/>
    </ligand>
</feature>
<feature type="binding site" evidence="4">
    <location>
        <position position="165"/>
    </location>
    <ligand>
        <name>K(+)</name>
        <dbReference type="ChEBI" id="CHEBI:29103"/>
    </ligand>
</feature>
<feature type="binding site" evidence="3">
    <location>
        <position position="171"/>
    </location>
    <ligand>
        <name>ATP</name>
        <dbReference type="ChEBI" id="CHEBI:30616"/>
    </ligand>
</feature>
<feature type="binding site" evidence="4">
    <location>
        <position position="314"/>
    </location>
    <ligand>
        <name>substrate</name>
    </ligand>
</feature>
<feature type="binding site" evidence="3">
    <location>
        <position position="316"/>
    </location>
    <ligand>
        <name>Mg(2+)</name>
        <dbReference type="ChEBI" id="CHEBI:18420"/>
    </ligand>
</feature>
<feature type="binding site" evidence="4">
    <location>
        <position position="339"/>
    </location>
    <ligand>
        <name>substrate</name>
    </ligand>
</feature>
<feature type="binding site" evidence="3">
    <location>
        <position position="340"/>
    </location>
    <ligand>
        <name>Mg(2+)</name>
        <dbReference type="ChEBI" id="CHEBI:18420"/>
    </ligand>
</feature>
<feature type="binding site" evidence="4">
    <location>
        <position position="340"/>
    </location>
    <ligand>
        <name>substrate</name>
    </ligand>
</feature>
<feature type="binding site" evidence="4">
    <location>
        <position position="372"/>
    </location>
    <ligand>
        <name>substrate</name>
    </ligand>
</feature>
<feature type="site" description="Transition state stabilizer" evidence="2">
    <location>
        <position position="314"/>
    </location>
</feature>
<comment type="function">
    <text evidence="1">Required for plastidial pyruvate kinase activity.</text>
</comment>
<comment type="catalytic activity">
    <reaction>
        <text>pyruvate + ATP = phosphoenolpyruvate + ADP + H(+)</text>
        <dbReference type="Rhea" id="RHEA:18157"/>
        <dbReference type="ChEBI" id="CHEBI:15361"/>
        <dbReference type="ChEBI" id="CHEBI:15378"/>
        <dbReference type="ChEBI" id="CHEBI:30616"/>
        <dbReference type="ChEBI" id="CHEBI:58702"/>
        <dbReference type="ChEBI" id="CHEBI:456216"/>
        <dbReference type="EC" id="2.7.1.40"/>
    </reaction>
</comment>
<comment type="cofactor">
    <cofactor evidence="6">
        <name>Mg(2+)</name>
        <dbReference type="ChEBI" id="CHEBI:18420"/>
    </cofactor>
</comment>
<comment type="cofactor">
    <cofactor evidence="6">
        <name>K(+)</name>
        <dbReference type="ChEBI" id="CHEBI:29103"/>
    </cofactor>
</comment>
<comment type="biophysicochemical properties">
    <phDependence>
        <text evidence="6">Optimum pH is 7.8-8.0.</text>
    </phDependence>
</comment>
<comment type="pathway">
    <text>Carbohydrate degradation; glycolysis; pyruvate from D-glyceraldehyde 3-phosphate: step 5/5.</text>
</comment>
<comment type="subunit">
    <text evidence="6">Oligomer of alpha and beta subunits.</text>
</comment>
<comment type="subcellular location">
    <subcellularLocation>
        <location evidence="6 8">Plastid</location>
        <location evidence="6 8">Chloroplast stroma</location>
    </subcellularLocation>
</comment>
<comment type="tissue specificity">
    <text evidence="6 7">Expressed at low levels in roots, leaves, inflorescences, siliques, pollen, seeds and flowers.</text>
</comment>
<comment type="similarity">
    <text evidence="9">Belongs to the pyruvate kinase family.</text>
</comment>
<comment type="sequence caution" evidence="9">
    <conflict type="erroneous gene model prediction">
        <sequence resource="EMBL-CDS" id="AAF81342"/>
    </conflict>
</comment>
<name>PKP3_ARATH</name>
<gene>
    <name type="primary">PKP3</name>
    <name type="ordered locus">At1g32440</name>
    <name type="ORF">F5D14.22</name>
</gene>
<reference key="1">
    <citation type="journal article" date="2000" name="Nature">
        <title>Sequence and analysis of chromosome 1 of the plant Arabidopsis thaliana.</title>
        <authorList>
            <person name="Theologis A."/>
            <person name="Ecker J.R."/>
            <person name="Palm C.J."/>
            <person name="Federspiel N.A."/>
            <person name="Kaul S."/>
            <person name="White O."/>
            <person name="Alonso J."/>
            <person name="Altafi H."/>
            <person name="Araujo R."/>
            <person name="Bowman C.L."/>
            <person name="Brooks S.Y."/>
            <person name="Buehler E."/>
            <person name="Chan A."/>
            <person name="Chao Q."/>
            <person name="Chen H."/>
            <person name="Cheuk R.F."/>
            <person name="Chin C.W."/>
            <person name="Chung M.K."/>
            <person name="Conn L."/>
            <person name="Conway A.B."/>
            <person name="Conway A.R."/>
            <person name="Creasy T.H."/>
            <person name="Dewar K."/>
            <person name="Dunn P."/>
            <person name="Etgu P."/>
            <person name="Feldblyum T.V."/>
            <person name="Feng J.-D."/>
            <person name="Fong B."/>
            <person name="Fujii C.Y."/>
            <person name="Gill J.E."/>
            <person name="Goldsmith A.D."/>
            <person name="Haas B."/>
            <person name="Hansen N.F."/>
            <person name="Hughes B."/>
            <person name="Huizar L."/>
            <person name="Hunter J.L."/>
            <person name="Jenkins J."/>
            <person name="Johnson-Hopson C."/>
            <person name="Khan S."/>
            <person name="Khaykin E."/>
            <person name="Kim C.J."/>
            <person name="Koo H.L."/>
            <person name="Kremenetskaia I."/>
            <person name="Kurtz D.B."/>
            <person name="Kwan A."/>
            <person name="Lam B."/>
            <person name="Langin-Hooper S."/>
            <person name="Lee A."/>
            <person name="Lee J.M."/>
            <person name="Lenz C.A."/>
            <person name="Li J.H."/>
            <person name="Li Y.-P."/>
            <person name="Lin X."/>
            <person name="Liu S.X."/>
            <person name="Liu Z.A."/>
            <person name="Luros J.S."/>
            <person name="Maiti R."/>
            <person name="Marziali A."/>
            <person name="Militscher J."/>
            <person name="Miranda M."/>
            <person name="Nguyen M."/>
            <person name="Nierman W.C."/>
            <person name="Osborne B.I."/>
            <person name="Pai G."/>
            <person name="Peterson J."/>
            <person name="Pham P.K."/>
            <person name="Rizzo M."/>
            <person name="Rooney T."/>
            <person name="Rowley D."/>
            <person name="Sakano H."/>
            <person name="Salzberg S.L."/>
            <person name="Schwartz J.R."/>
            <person name="Shinn P."/>
            <person name="Southwick A.M."/>
            <person name="Sun H."/>
            <person name="Tallon L.J."/>
            <person name="Tambunga G."/>
            <person name="Toriumi M.J."/>
            <person name="Town C.D."/>
            <person name="Utterback T."/>
            <person name="Van Aken S."/>
            <person name="Vaysberg M."/>
            <person name="Vysotskaia V.S."/>
            <person name="Walker M."/>
            <person name="Wu D."/>
            <person name="Yu G."/>
            <person name="Fraser C.M."/>
            <person name="Venter J.C."/>
            <person name="Davis R.W."/>
        </authorList>
    </citation>
    <scope>NUCLEOTIDE SEQUENCE [LARGE SCALE GENOMIC DNA]</scope>
    <source>
        <strain>cv. Columbia</strain>
    </source>
</reference>
<reference key="2">
    <citation type="journal article" date="2017" name="Plant J.">
        <title>Araport11: a complete reannotation of the Arabidopsis thaliana reference genome.</title>
        <authorList>
            <person name="Cheng C.Y."/>
            <person name="Krishnakumar V."/>
            <person name="Chan A.P."/>
            <person name="Thibaud-Nissen F."/>
            <person name="Schobel S."/>
            <person name="Town C.D."/>
        </authorList>
    </citation>
    <scope>GENOME REANNOTATION</scope>
    <source>
        <strain>cv. Columbia</strain>
    </source>
</reference>
<reference key="3">
    <citation type="journal article" date="2003" name="Science">
        <title>Empirical analysis of transcriptional activity in the Arabidopsis genome.</title>
        <authorList>
            <person name="Yamada K."/>
            <person name="Lim J."/>
            <person name="Dale J.M."/>
            <person name="Chen H."/>
            <person name="Shinn P."/>
            <person name="Palm C.J."/>
            <person name="Southwick A.M."/>
            <person name="Wu H.C."/>
            <person name="Kim C.J."/>
            <person name="Nguyen M."/>
            <person name="Pham P.K."/>
            <person name="Cheuk R.F."/>
            <person name="Karlin-Newmann G."/>
            <person name="Liu S.X."/>
            <person name="Lam B."/>
            <person name="Sakano H."/>
            <person name="Wu T."/>
            <person name="Yu G."/>
            <person name="Miranda M."/>
            <person name="Quach H.L."/>
            <person name="Tripp M."/>
            <person name="Chang C.H."/>
            <person name="Lee J.M."/>
            <person name="Toriumi M.J."/>
            <person name="Chan M.M."/>
            <person name="Tang C.C."/>
            <person name="Onodera C.S."/>
            <person name="Deng J.M."/>
            <person name="Akiyama K."/>
            <person name="Ansari Y."/>
            <person name="Arakawa T."/>
            <person name="Banh J."/>
            <person name="Banno F."/>
            <person name="Bowser L."/>
            <person name="Brooks S.Y."/>
            <person name="Carninci P."/>
            <person name="Chao Q."/>
            <person name="Choy N."/>
            <person name="Enju A."/>
            <person name="Goldsmith A.D."/>
            <person name="Gurjal M."/>
            <person name="Hansen N.F."/>
            <person name="Hayashizaki Y."/>
            <person name="Johnson-Hopson C."/>
            <person name="Hsuan V.W."/>
            <person name="Iida K."/>
            <person name="Karnes M."/>
            <person name="Khan S."/>
            <person name="Koesema E."/>
            <person name="Ishida J."/>
            <person name="Jiang P.X."/>
            <person name="Jones T."/>
            <person name="Kawai J."/>
            <person name="Kamiya A."/>
            <person name="Meyers C."/>
            <person name="Nakajima M."/>
            <person name="Narusaka M."/>
            <person name="Seki M."/>
            <person name="Sakurai T."/>
            <person name="Satou M."/>
            <person name="Tamse R."/>
            <person name="Vaysberg M."/>
            <person name="Wallender E.K."/>
            <person name="Wong C."/>
            <person name="Yamamura Y."/>
            <person name="Yuan S."/>
            <person name="Shinozaki K."/>
            <person name="Davis R.W."/>
            <person name="Theologis A."/>
            <person name="Ecker J.R."/>
        </authorList>
    </citation>
    <scope>NUCLEOTIDE SEQUENCE [LARGE SCALE MRNA]</scope>
    <source>
        <strain>cv. Columbia</strain>
    </source>
</reference>
<reference key="4">
    <citation type="journal article" date="2007" name="Plant Cell">
        <title>A heteromeric plastidic pyruvate kinase complex involved in seed oil biosynthesis in Arabidopsis.</title>
        <authorList>
            <person name="Andre C."/>
            <person name="Froehlich J.E."/>
            <person name="Moll M.R."/>
            <person name="Benning C."/>
        </authorList>
    </citation>
    <scope>TISSUE SPECIFICITY</scope>
    <scope>SUBUNIT</scope>
    <scope>SUBCELLULAR LOCATION</scope>
    <scope>COFACTOR</scope>
    <scope>BIOPHYSICOCHEMICAL PROPERTIES</scope>
    <scope>GENE FAMILY</scope>
</reference>
<reference key="5">
    <citation type="journal article" date="2007" name="Plant J.">
        <title>Function of plastidial pyruvate kinases in seeds of Arabidopsis thaliana.</title>
        <authorList>
            <person name="Baud S."/>
            <person name="Wuilleme S."/>
            <person name="Dubreucq B."/>
            <person name="de Almeida A."/>
            <person name="Vuagnat C."/>
            <person name="Lepiniec L."/>
            <person name="Miquel M."/>
            <person name="Rochat C."/>
        </authorList>
    </citation>
    <scope>TISSUE SPECIFICITY</scope>
    <scope>GENE FAMILY</scope>
    <scope>NOMENCLATURE</scope>
    <source>
        <strain>cv. Wassilewskija</strain>
    </source>
</reference>
<reference key="6">
    <citation type="journal article" date="2008" name="PLoS ONE">
        <title>Sorting signals, N-terminal modifications and abundance of the chloroplast proteome.</title>
        <authorList>
            <person name="Zybailov B."/>
            <person name="Rutschow H."/>
            <person name="Friso G."/>
            <person name="Rudella A."/>
            <person name="Emanuelsson O."/>
            <person name="Sun Q."/>
            <person name="van Wijk K.J."/>
        </authorList>
    </citation>
    <scope>IDENTIFICATION BY MASS SPECTROMETRY</scope>
    <scope>SUBCELLULAR LOCATION [LARGE SCALE ANALYSIS]</scope>
</reference>
<protein>
    <recommendedName>
        <fullName>Plastidial pyruvate kinase 3, chloroplastic</fullName>
        <shortName>PKp3</shortName>
        <ecNumber>2.7.1.40</ecNumber>
    </recommendedName>
    <alternativeName>
        <fullName>Pyruvate kinase I</fullName>
    </alternativeName>
    <alternativeName>
        <fullName>Pyruvate kinase isozyme B2, chloroplastic</fullName>
        <shortName>PKP-BETA2</shortName>
        <shortName>Plastidic pyruvate kinase beta subunit 2</shortName>
    </alternativeName>
</protein>
<sequence>MAAYGQISSGMTVDPQVLSSSRNIGVSLSPLRRTLIGAGVRSTSISLRQCSLSVRSIKISEDSRKPKAYAENGAFDVGVLDSSSYRLADSRTSSNDSRRKTKIVCTIGPSSSSREMIWKLAEAGMNVARLNMSHGDHASHQITIDLVKEYNSLFVDKAIAIMLDTKGPEVRSGDVPQPIFLEEGQEFNFTIKRGVSLKDTVSVNYDDFVNDVEVGDILLVDGGMMSLAVKSKTSDLVKCVVIDGGELQSRRHLNVRGKSATLPSITDKDWEDIKFGVDNQVDFYAVSFVKDAKVVHELKNYLKTCSADISVIVKIESADSIKNLPSIISACDGAMVARGDLGAELPIEEVPLLQEEIIRRCRSIHKPVIVATNMLESMINHPTPTRAEVSDIAIAVREGADAIMLSGETAHGKFPLKAVNVMHTVALRTEASLPVRTSASRTTAYKGHMGQMFAFHASIMANTLSSPLIVFTRTGSMAVLLSHYRPSATIFAFTNQRRIMQRLALYQGVMPIYMEFSDDAEDTYARSLKLLQDENMLKEGQHVTLVQSGSQPIWREESTHLIQVRKIKIGG</sequence>
<keyword id="KW-0067">ATP-binding</keyword>
<keyword id="KW-0150">Chloroplast</keyword>
<keyword id="KW-0324">Glycolysis</keyword>
<keyword id="KW-0418">Kinase</keyword>
<keyword id="KW-0460">Magnesium</keyword>
<keyword id="KW-0479">Metal-binding</keyword>
<keyword id="KW-0547">Nucleotide-binding</keyword>
<keyword id="KW-0934">Plastid</keyword>
<keyword id="KW-0630">Potassium</keyword>
<keyword id="KW-0670">Pyruvate</keyword>
<keyword id="KW-1185">Reference proteome</keyword>
<keyword id="KW-0808">Transferase</keyword>
<keyword id="KW-0809">Transit peptide</keyword>
<accession>Q93Z53</accession>
<accession>Q9LQL3</accession>